<name>DPP5_ASPFU</name>
<keyword id="KW-0325">Glycoprotein</keyword>
<keyword id="KW-0378">Hydrolase</keyword>
<keyword id="KW-0645">Protease</keyword>
<keyword id="KW-1185">Reference proteome</keyword>
<keyword id="KW-0964">Secreted</keyword>
<keyword id="KW-0720">Serine protease</keyword>
<keyword id="KW-0732">Signal</keyword>
<gene>
    <name type="ORF">AFUA_2G09030</name>
</gene>
<reference key="1">
    <citation type="journal article" date="2005" name="Nature">
        <title>Genomic sequence of the pathogenic and allergenic filamentous fungus Aspergillus fumigatus.</title>
        <authorList>
            <person name="Nierman W.C."/>
            <person name="Pain A."/>
            <person name="Anderson M.J."/>
            <person name="Wortman J.R."/>
            <person name="Kim H.S."/>
            <person name="Arroyo J."/>
            <person name="Berriman M."/>
            <person name="Abe K."/>
            <person name="Archer D.B."/>
            <person name="Bermejo C."/>
            <person name="Bennett J.W."/>
            <person name="Bowyer P."/>
            <person name="Chen D."/>
            <person name="Collins M."/>
            <person name="Coulsen R."/>
            <person name="Davies R."/>
            <person name="Dyer P.S."/>
            <person name="Farman M.L."/>
            <person name="Fedorova N."/>
            <person name="Fedorova N.D."/>
            <person name="Feldblyum T.V."/>
            <person name="Fischer R."/>
            <person name="Fosker N."/>
            <person name="Fraser A."/>
            <person name="Garcia J.L."/>
            <person name="Garcia M.J."/>
            <person name="Goble A."/>
            <person name="Goldman G.H."/>
            <person name="Gomi K."/>
            <person name="Griffith-Jones S."/>
            <person name="Gwilliam R."/>
            <person name="Haas B.J."/>
            <person name="Haas H."/>
            <person name="Harris D.E."/>
            <person name="Horiuchi H."/>
            <person name="Huang J."/>
            <person name="Humphray S."/>
            <person name="Jimenez J."/>
            <person name="Keller N."/>
            <person name="Khouri H."/>
            <person name="Kitamoto K."/>
            <person name="Kobayashi T."/>
            <person name="Konzack S."/>
            <person name="Kulkarni R."/>
            <person name="Kumagai T."/>
            <person name="Lafton A."/>
            <person name="Latge J.-P."/>
            <person name="Li W."/>
            <person name="Lord A."/>
            <person name="Lu C."/>
            <person name="Majoros W.H."/>
            <person name="May G.S."/>
            <person name="Miller B.L."/>
            <person name="Mohamoud Y."/>
            <person name="Molina M."/>
            <person name="Monod M."/>
            <person name="Mouyna I."/>
            <person name="Mulligan S."/>
            <person name="Murphy L.D."/>
            <person name="O'Neil S."/>
            <person name="Paulsen I."/>
            <person name="Penalva M.A."/>
            <person name="Pertea M."/>
            <person name="Price C."/>
            <person name="Pritchard B.L."/>
            <person name="Quail M.A."/>
            <person name="Rabbinowitsch E."/>
            <person name="Rawlins N."/>
            <person name="Rajandream M.A."/>
            <person name="Reichard U."/>
            <person name="Renauld H."/>
            <person name="Robson G.D."/>
            <person name="Rodriguez de Cordoba S."/>
            <person name="Rodriguez-Pena J.M."/>
            <person name="Ronning C.M."/>
            <person name="Rutter S."/>
            <person name="Salzberg S.L."/>
            <person name="Sanchez M."/>
            <person name="Sanchez-Ferrero J.C."/>
            <person name="Saunders D."/>
            <person name="Seeger K."/>
            <person name="Squares R."/>
            <person name="Squares S."/>
            <person name="Takeuchi M."/>
            <person name="Tekaia F."/>
            <person name="Turner G."/>
            <person name="Vazquez de Aldana C.R."/>
            <person name="Weidman J."/>
            <person name="White O."/>
            <person name="Woodward J.R."/>
            <person name="Yu J.-H."/>
            <person name="Fraser C.M."/>
            <person name="Galagan J.E."/>
            <person name="Asai K."/>
            <person name="Machida M."/>
            <person name="Hall N."/>
            <person name="Barrell B.G."/>
            <person name="Denning D.W."/>
        </authorList>
    </citation>
    <scope>NUCLEOTIDE SEQUENCE [LARGE SCALE GENOMIC DNA]</scope>
    <source>
        <strain>ATCC MYA-4609 / CBS 101355 / FGSC A1100 / Af293</strain>
    </source>
</reference>
<accession>P0C959</accession>
<accession>O13479</accession>
<accession>Q4X1R6</accession>
<organism>
    <name type="scientific">Aspergillus fumigatus (strain ATCC MYA-4609 / CBS 101355 / FGSC A1100 / Af293)</name>
    <name type="common">Neosartorya fumigata</name>
    <dbReference type="NCBI Taxonomy" id="330879"/>
    <lineage>
        <taxon>Eukaryota</taxon>
        <taxon>Fungi</taxon>
        <taxon>Dikarya</taxon>
        <taxon>Ascomycota</taxon>
        <taxon>Pezizomycotina</taxon>
        <taxon>Eurotiomycetes</taxon>
        <taxon>Eurotiomycetidae</taxon>
        <taxon>Eurotiales</taxon>
        <taxon>Aspergillaceae</taxon>
        <taxon>Aspergillus</taxon>
        <taxon>Aspergillus subgen. Fumigati</taxon>
    </lineage>
</organism>
<sequence>MGAFRWLSIAAAASTALALTPEQLITAPRRSEAIPDPSGKVAVFSTSQYSFETHKRTSWWSLLDLKTGQTKVLTNDSSVSEIVWLSDDSILYVNSTNADIPGGVELWVTQASSFAKGYKAASLPASFSGLKTAKTKSGDIRFVAYGQSYPNGTAYNEELATAPLSSARIYDSIYVRHWDYWLSTTFNAVFSGTLKKGHGKNGYSLDGELKNLVSPVKNAESPYPPFGGASDYDLSPDGKWVAFKSKAPELPKANFTTSYIYLVPHDASETARPINGPDSPGTPKGIKGDSSSPVFSPNGDKLAYFQMRDETYESDRRVLYVYSLGSKKTIPSVAGDWDRSPDSVKWTPDGKTLIVGSEDLGRTRLFSLPANAKDDYKPKNFTDGGSASAYYFLPDSSLLVTGSALWTNWNVYTAKPEKGVIKKIASANEIDPELKGLGPSDISEFYFQGNFTDIHAWVIYPENFDKSKKYPLIFFIHGGPQGNWADGWSTRWNPKAWADQGYVVVAPNPTGSTGFGQALTDAIQNNWGGAPYDDLVKCWEYVHENLDYVDTDHGVAAGASYGGFMINWIQGSPLGRKFKALVSHDGTFVADAKVSTEELWFMQREFNGTFWDARDNYRRWDPSAPERILQFATPMLVIHSDKDYRLPVAEGLSLFNVLQERGVPSRFLNFPDENHWVVNPENSLVWHQQALGWINKYSGVEKSNPNAVSLEDTVVPVVNYN</sequence>
<dbReference type="EC" id="3.4.14.-"/>
<dbReference type="EMBL" id="AAHF01000001">
    <property type="protein sequence ID" value="EAL93199.1"/>
    <property type="molecule type" value="Genomic_DNA"/>
</dbReference>
<dbReference type="PIR" id="T09631">
    <property type="entry name" value="T09631"/>
</dbReference>
<dbReference type="RefSeq" id="XP_755237.1">
    <property type="nucleotide sequence ID" value="XM_750144.1"/>
</dbReference>
<dbReference type="SMR" id="P0C959"/>
<dbReference type="STRING" id="330879.P0C959"/>
<dbReference type="Allergome" id="8984">
    <property type="allergen name" value="Asp f DPPV"/>
</dbReference>
<dbReference type="ESTHER" id="aspfc-dpp5">
    <property type="family name" value="Prolyl_oligopeptidase_S9"/>
</dbReference>
<dbReference type="MEROPS" id="S09.012"/>
<dbReference type="EnsemblFungi" id="EAL93199">
    <property type="protein sequence ID" value="EAL93199"/>
    <property type="gene ID" value="AFUA_2G09030"/>
</dbReference>
<dbReference type="GeneID" id="3512867"/>
<dbReference type="KEGG" id="afm:AFUA_2G09030"/>
<dbReference type="VEuPathDB" id="FungiDB:Afu2g09030"/>
<dbReference type="eggNOG" id="KOG2100">
    <property type="taxonomic scope" value="Eukaryota"/>
</dbReference>
<dbReference type="HOGENOM" id="CLU_008615_0_1_1"/>
<dbReference type="InParanoid" id="P0C959"/>
<dbReference type="OMA" id="YPVRYWD"/>
<dbReference type="OrthoDB" id="416344at2759"/>
<dbReference type="Proteomes" id="UP000002530">
    <property type="component" value="Chromosome 2"/>
</dbReference>
<dbReference type="GO" id="GO:0005576">
    <property type="term" value="C:extracellular region"/>
    <property type="evidence" value="ECO:0007669"/>
    <property type="project" value="UniProtKB-SubCell"/>
</dbReference>
<dbReference type="GO" id="GO:0008233">
    <property type="term" value="F:peptidase activity"/>
    <property type="evidence" value="ECO:0000314"/>
    <property type="project" value="AspGD"/>
</dbReference>
<dbReference type="GO" id="GO:0004252">
    <property type="term" value="F:serine-type endopeptidase activity"/>
    <property type="evidence" value="ECO:0000318"/>
    <property type="project" value="GO_Central"/>
</dbReference>
<dbReference type="GO" id="GO:0006508">
    <property type="term" value="P:proteolysis"/>
    <property type="evidence" value="ECO:0007669"/>
    <property type="project" value="UniProtKB-KW"/>
</dbReference>
<dbReference type="FunFam" id="2.120.10.30:FF:000109">
    <property type="entry name" value="Dipeptidyl-peptidase 5"/>
    <property type="match status" value="1"/>
</dbReference>
<dbReference type="FunFam" id="3.40.50.1820:FF:000028">
    <property type="entry name" value="S9 family peptidase"/>
    <property type="match status" value="1"/>
</dbReference>
<dbReference type="Gene3D" id="3.40.50.1820">
    <property type="entry name" value="alpha/beta hydrolase"/>
    <property type="match status" value="1"/>
</dbReference>
<dbReference type="Gene3D" id="2.120.10.30">
    <property type="entry name" value="TolB, C-terminal domain"/>
    <property type="match status" value="1"/>
</dbReference>
<dbReference type="InterPro" id="IPR011042">
    <property type="entry name" value="6-blade_b-propeller_TolB-like"/>
</dbReference>
<dbReference type="InterPro" id="IPR029058">
    <property type="entry name" value="AB_hydrolase_fold"/>
</dbReference>
<dbReference type="InterPro" id="IPR011659">
    <property type="entry name" value="PD40"/>
</dbReference>
<dbReference type="InterPro" id="IPR001375">
    <property type="entry name" value="Peptidase_S9_cat"/>
</dbReference>
<dbReference type="PANTHER" id="PTHR42776:SF11">
    <property type="entry name" value="DIPEPTIDYL-PEPTIDASE 5-RELATED"/>
    <property type="match status" value="1"/>
</dbReference>
<dbReference type="PANTHER" id="PTHR42776">
    <property type="entry name" value="SERINE PEPTIDASE S9 FAMILY MEMBER"/>
    <property type="match status" value="1"/>
</dbReference>
<dbReference type="Pfam" id="PF07676">
    <property type="entry name" value="PD40"/>
    <property type="match status" value="1"/>
</dbReference>
<dbReference type="Pfam" id="PF00326">
    <property type="entry name" value="Peptidase_S9"/>
    <property type="match status" value="1"/>
</dbReference>
<dbReference type="SUPFAM" id="SSF53474">
    <property type="entry name" value="alpha/beta-Hydrolases"/>
    <property type="match status" value="1"/>
</dbReference>
<dbReference type="SUPFAM" id="SSF82171">
    <property type="entry name" value="DPP6 N-terminal domain-like"/>
    <property type="match status" value="1"/>
</dbReference>
<evidence type="ECO:0000250" key="1"/>
<evidence type="ECO:0000255" key="2"/>
<evidence type="ECO:0000256" key="3">
    <source>
        <dbReference type="SAM" id="MobiDB-lite"/>
    </source>
</evidence>
<evidence type="ECO:0000305" key="4"/>
<feature type="signal peptide" evidence="1">
    <location>
        <begin position="1"/>
        <end position="18"/>
    </location>
</feature>
<feature type="chain" id="PRO_0000027223" description="Dipeptidyl-peptidase 5">
    <location>
        <begin position="19"/>
        <end position="721"/>
    </location>
</feature>
<feature type="region of interest" description="Disordered" evidence="3">
    <location>
        <begin position="271"/>
        <end position="297"/>
    </location>
</feature>
<feature type="active site" description="Charge relay system" evidence="1">
    <location>
        <position position="560"/>
    </location>
</feature>
<feature type="active site" description="Charge relay system" evidence="1">
    <location>
        <position position="643"/>
    </location>
</feature>
<feature type="active site" description="Charge relay system" evidence="1">
    <location>
        <position position="675"/>
    </location>
</feature>
<feature type="glycosylation site" description="N-linked (GlcNAc...) asparagine" evidence="2">
    <location>
        <position position="75"/>
    </location>
</feature>
<feature type="glycosylation site" description="N-linked (GlcNAc...) asparagine" evidence="2">
    <location>
        <position position="94"/>
    </location>
</feature>
<feature type="glycosylation site" description="N-linked (GlcNAc...) asparagine" evidence="2">
    <location>
        <position position="151"/>
    </location>
</feature>
<feature type="glycosylation site" description="N-linked (GlcNAc...) asparagine" evidence="2">
    <location>
        <position position="254"/>
    </location>
</feature>
<feature type="glycosylation site" description="N-linked (GlcNAc...) asparagine" evidence="2">
    <location>
        <position position="380"/>
    </location>
</feature>
<feature type="glycosylation site" description="N-linked (GlcNAc...) asparagine" evidence="2">
    <location>
        <position position="450"/>
    </location>
</feature>
<feature type="glycosylation site" description="N-linked (GlcNAc...) asparagine" evidence="2">
    <location>
        <position position="607"/>
    </location>
</feature>
<protein>
    <recommendedName>
        <fullName>Dipeptidyl-peptidase 5</fullName>
        <ecNumber>3.4.14.-</ecNumber>
    </recommendedName>
    <alternativeName>
        <fullName>Dipeptidyl-peptidase V</fullName>
        <shortName>DPP V</shortName>
        <shortName>DppV</shortName>
    </alternativeName>
</protein>
<proteinExistence type="evidence at transcript level"/>
<comment type="function">
    <text evidence="1">May be involved in metabolism of dipeptides or may affect host defense mechanisms. Has a substrate specificity limited to the hydrolysis of X-Ala, His-Ser, and Ser-Tyr dipeptides at a neutral pH optimum (By similarity).</text>
</comment>
<comment type="subcellular location">
    <subcellularLocation>
        <location evidence="1">Secreted</location>
    </subcellularLocation>
</comment>
<comment type="tissue specificity">
    <text>Expressed in mycelia and conidia.</text>
</comment>
<comment type="PTM">
    <text evidence="1">N-glycosylated.</text>
</comment>
<comment type="similarity">
    <text evidence="4">Belongs to the peptidase S9C family.</text>
</comment>